<name>GATB_LEGPA</name>
<sequence length="477" mass="53724">MEWDTVIGLEVHAQLKTKSKLFSGASTAFGATPNSQTSFIDAGLPGVLPVLNEQAIIMAIQFGLAIHGTINDLSVFERKNYFYPDLPKGYQISQYQKPIVTNGYLNIQLGNNLEKTVHIARAHLEEDAGKSLHDAHTDYTGIDLNRAGTPLLEIVTTPCLYSAEEAVNYLKTLHQLVRFLGICDGNMQEGSFRCDVNLSIKPKGSSVLGTRTELKNLNSFRFIEKAIAFEQARHQDILERGLSVIQETRLYNPDNNTTQAMRGKENENDYRYFPDPDLLPIDIDKEQIEEIKNNLPDLPEAIYKELKNTPSLNDEDINFILSSPDTYQYYKKIKSLCPAADKTIINWLKGQYAAFLNEHNLTFETPPISAKTMAAFLSKIHEKKISSSIAKNIFSMLCAGEEDIDAIIEREGYQQQNDNSALEEIVEQIIKQYPEQVIEYKAGKEKLLAFFIGQAMKQTKGKANPEQINLLLKKHLG</sequence>
<dbReference type="EC" id="6.3.5.-" evidence="1"/>
<dbReference type="EMBL" id="CR628336">
    <property type="protein sequence ID" value="CAH12854.1"/>
    <property type="molecule type" value="Genomic_DNA"/>
</dbReference>
<dbReference type="RefSeq" id="WP_011214005.1">
    <property type="nucleotide sequence ID" value="NC_006368.1"/>
</dbReference>
<dbReference type="SMR" id="Q5X4H4"/>
<dbReference type="KEGG" id="lpp:lpp1702"/>
<dbReference type="LegioList" id="lpp1702"/>
<dbReference type="HOGENOM" id="CLU_019240_0_0_6"/>
<dbReference type="GO" id="GO:0050566">
    <property type="term" value="F:asparaginyl-tRNA synthase (glutamine-hydrolyzing) activity"/>
    <property type="evidence" value="ECO:0007669"/>
    <property type="project" value="RHEA"/>
</dbReference>
<dbReference type="GO" id="GO:0005524">
    <property type="term" value="F:ATP binding"/>
    <property type="evidence" value="ECO:0007669"/>
    <property type="project" value="UniProtKB-KW"/>
</dbReference>
<dbReference type="GO" id="GO:0050567">
    <property type="term" value="F:glutaminyl-tRNA synthase (glutamine-hydrolyzing) activity"/>
    <property type="evidence" value="ECO:0007669"/>
    <property type="project" value="UniProtKB-UniRule"/>
</dbReference>
<dbReference type="GO" id="GO:0070681">
    <property type="term" value="P:glutaminyl-tRNAGln biosynthesis via transamidation"/>
    <property type="evidence" value="ECO:0007669"/>
    <property type="project" value="TreeGrafter"/>
</dbReference>
<dbReference type="GO" id="GO:0006412">
    <property type="term" value="P:translation"/>
    <property type="evidence" value="ECO:0007669"/>
    <property type="project" value="UniProtKB-UniRule"/>
</dbReference>
<dbReference type="FunFam" id="1.10.10.410:FF:000001">
    <property type="entry name" value="Aspartyl/glutamyl-tRNA(Asn/Gln) amidotransferase subunit B"/>
    <property type="match status" value="1"/>
</dbReference>
<dbReference type="Gene3D" id="1.10.10.410">
    <property type="match status" value="1"/>
</dbReference>
<dbReference type="HAMAP" id="MF_00121">
    <property type="entry name" value="GatB"/>
    <property type="match status" value="1"/>
</dbReference>
<dbReference type="InterPro" id="IPR017959">
    <property type="entry name" value="Asn/Gln-tRNA_amidoTrfase_suB/E"/>
</dbReference>
<dbReference type="InterPro" id="IPR006075">
    <property type="entry name" value="Asn/Gln-tRNA_Trfase_suB/E_cat"/>
</dbReference>
<dbReference type="InterPro" id="IPR018027">
    <property type="entry name" value="Asn/Gln_amidotransferase"/>
</dbReference>
<dbReference type="InterPro" id="IPR003789">
    <property type="entry name" value="Asn/Gln_tRNA_amidoTrase-B-like"/>
</dbReference>
<dbReference type="InterPro" id="IPR004413">
    <property type="entry name" value="GatB"/>
</dbReference>
<dbReference type="InterPro" id="IPR023168">
    <property type="entry name" value="GatB_Yqey_C_2"/>
</dbReference>
<dbReference type="InterPro" id="IPR017958">
    <property type="entry name" value="Gln-tRNA_amidoTrfase_suB_CS"/>
</dbReference>
<dbReference type="InterPro" id="IPR014746">
    <property type="entry name" value="Gln_synth/guanido_kin_cat_dom"/>
</dbReference>
<dbReference type="NCBIfam" id="TIGR00133">
    <property type="entry name" value="gatB"/>
    <property type="match status" value="1"/>
</dbReference>
<dbReference type="NCBIfam" id="NF004012">
    <property type="entry name" value="PRK05477.1-2"/>
    <property type="match status" value="1"/>
</dbReference>
<dbReference type="NCBIfam" id="NF004014">
    <property type="entry name" value="PRK05477.1-4"/>
    <property type="match status" value="1"/>
</dbReference>
<dbReference type="PANTHER" id="PTHR11659">
    <property type="entry name" value="GLUTAMYL-TRNA GLN AMIDOTRANSFERASE SUBUNIT B MITOCHONDRIAL AND PROKARYOTIC PET112-RELATED"/>
    <property type="match status" value="1"/>
</dbReference>
<dbReference type="PANTHER" id="PTHR11659:SF0">
    <property type="entry name" value="GLUTAMYL-TRNA(GLN) AMIDOTRANSFERASE SUBUNIT B, MITOCHONDRIAL"/>
    <property type="match status" value="1"/>
</dbReference>
<dbReference type="Pfam" id="PF02934">
    <property type="entry name" value="GatB_N"/>
    <property type="match status" value="1"/>
</dbReference>
<dbReference type="Pfam" id="PF02637">
    <property type="entry name" value="GatB_Yqey"/>
    <property type="match status" value="1"/>
</dbReference>
<dbReference type="SMART" id="SM00845">
    <property type="entry name" value="GatB_Yqey"/>
    <property type="match status" value="1"/>
</dbReference>
<dbReference type="SUPFAM" id="SSF89095">
    <property type="entry name" value="GatB/YqeY motif"/>
    <property type="match status" value="1"/>
</dbReference>
<dbReference type="SUPFAM" id="SSF55931">
    <property type="entry name" value="Glutamine synthetase/guanido kinase"/>
    <property type="match status" value="1"/>
</dbReference>
<dbReference type="PROSITE" id="PS01234">
    <property type="entry name" value="GATB"/>
    <property type="match status" value="1"/>
</dbReference>
<keyword id="KW-0067">ATP-binding</keyword>
<keyword id="KW-0436">Ligase</keyword>
<keyword id="KW-0547">Nucleotide-binding</keyword>
<keyword id="KW-0648">Protein biosynthesis</keyword>
<evidence type="ECO:0000255" key="1">
    <source>
        <dbReference type="HAMAP-Rule" id="MF_00121"/>
    </source>
</evidence>
<protein>
    <recommendedName>
        <fullName evidence="1">Aspartyl/glutamyl-tRNA(Asn/Gln) amidotransferase subunit B</fullName>
        <shortName evidence="1">Asp/Glu-ADT subunit B</shortName>
        <ecNumber evidence="1">6.3.5.-</ecNumber>
    </recommendedName>
</protein>
<gene>
    <name evidence="1" type="primary">gatB</name>
    <name type="ordered locus">lpp1702</name>
</gene>
<proteinExistence type="inferred from homology"/>
<accession>Q5X4H4</accession>
<feature type="chain" id="PRO_0000241234" description="Aspartyl/glutamyl-tRNA(Asn/Gln) amidotransferase subunit B">
    <location>
        <begin position="1"/>
        <end position="477"/>
    </location>
</feature>
<reference key="1">
    <citation type="journal article" date="2004" name="Nat. Genet.">
        <title>Evidence in the Legionella pneumophila genome for exploitation of host cell functions and high genome plasticity.</title>
        <authorList>
            <person name="Cazalet C."/>
            <person name="Rusniok C."/>
            <person name="Brueggemann H."/>
            <person name="Zidane N."/>
            <person name="Magnier A."/>
            <person name="Ma L."/>
            <person name="Tichit M."/>
            <person name="Jarraud S."/>
            <person name="Bouchier C."/>
            <person name="Vandenesch F."/>
            <person name="Kunst F."/>
            <person name="Etienne J."/>
            <person name="Glaser P."/>
            <person name="Buchrieser C."/>
        </authorList>
    </citation>
    <scope>NUCLEOTIDE SEQUENCE [LARGE SCALE GENOMIC DNA]</scope>
    <source>
        <strain>Paris</strain>
    </source>
</reference>
<organism>
    <name type="scientific">Legionella pneumophila (strain Paris)</name>
    <dbReference type="NCBI Taxonomy" id="297246"/>
    <lineage>
        <taxon>Bacteria</taxon>
        <taxon>Pseudomonadati</taxon>
        <taxon>Pseudomonadota</taxon>
        <taxon>Gammaproteobacteria</taxon>
        <taxon>Legionellales</taxon>
        <taxon>Legionellaceae</taxon>
        <taxon>Legionella</taxon>
    </lineage>
</organism>
<comment type="function">
    <text evidence="1">Allows the formation of correctly charged Asn-tRNA(Asn) or Gln-tRNA(Gln) through the transamidation of misacylated Asp-tRNA(Asn) or Glu-tRNA(Gln) in organisms which lack either or both of asparaginyl-tRNA or glutaminyl-tRNA synthetases. The reaction takes place in the presence of glutamine and ATP through an activated phospho-Asp-tRNA(Asn) or phospho-Glu-tRNA(Gln).</text>
</comment>
<comment type="catalytic activity">
    <reaction evidence="1">
        <text>L-glutamyl-tRNA(Gln) + L-glutamine + ATP + H2O = L-glutaminyl-tRNA(Gln) + L-glutamate + ADP + phosphate + H(+)</text>
        <dbReference type="Rhea" id="RHEA:17521"/>
        <dbReference type="Rhea" id="RHEA-COMP:9681"/>
        <dbReference type="Rhea" id="RHEA-COMP:9684"/>
        <dbReference type="ChEBI" id="CHEBI:15377"/>
        <dbReference type="ChEBI" id="CHEBI:15378"/>
        <dbReference type="ChEBI" id="CHEBI:29985"/>
        <dbReference type="ChEBI" id="CHEBI:30616"/>
        <dbReference type="ChEBI" id="CHEBI:43474"/>
        <dbReference type="ChEBI" id="CHEBI:58359"/>
        <dbReference type="ChEBI" id="CHEBI:78520"/>
        <dbReference type="ChEBI" id="CHEBI:78521"/>
        <dbReference type="ChEBI" id="CHEBI:456216"/>
    </reaction>
</comment>
<comment type="catalytic activity">
    <reaction evidence="1">
        <text>L-aspartyl-tRNA(Asn) + L-glutamine + ATP + H2O = L-asparaginyl-tRNA(Asn) + L-glutamate + ADP + phosphate + 2 H(+)</text>
        <dbReference type="Rhea" id="RHEA:14513"/>
        <dbReference type="Rhea" id="RHEA-COMP:9674"/>
        <dbReference type="Rhea" id="RHEA-COMP:9677"/>
        <dbReference type="ChEBI" id="CHEBI:15377"/>
        <dbReference type="ChEBI" id="CHEBI:15378"/>
        <dbReference type="ChEBI" id="CHEBI:29985"/>
        <dbReference type="ChEBI" id="CHEBI:30616"/>
        <dbReference type="ChEBI" id="CHEBI:43474"/>
        <dbReference type="ChEBI" id="CHEBI:58359"/>
        <dbReference type="ChEBI" id="CHEBI:78515"/>
        <dbReference type="ChEBI" id="CHEBI:78516"/>
        <dbReference type="ChEBI" id="CHEBI:456216"/>
    </reaction>
</comment>
<comment type="subunit">
    <text evidence="1">Heterotrimer of A, B and C subunits.</text>
</comment>
<comment type="similarity">
    <text evidence="1">Belongs to the GatB/GatE family. GatB subfamily.</text>
</comment>